<feature type="chain" id="PRO_1000045662" description="Probable glycine dehydrogenase (decarboxylating) subunit 1">
    <location>
        <begin position="1"/>
        <end position="456"/>
    </location>
</feature>
<protein>
    <recommendedName>
        <fullName evidence="1">Probable glycine dehydrogenase (decarboxylating) subunit 1</fullName>
        <ecNumber evidence="1">1.4.4.2</ecNumber>
    </recommendedName>
    <alternativeName>
        <fullName evidence="1">Glycine cleavage system P-protein subunit 1</fullName>
    </alternativeName>
    <alternativeName>
        <fullName evidence="1">Glycine decarboxylase subunit 1</fullName>
    </alternativeName>
    <alternativeName>
        <fullName evidence="1">Glycine dehydrogenase (aminomethyl-transferring) subunit 1</fullName>
    </alternativeName>
</protein>
<organism>
    <name type="scientific">Legionella pneumophila subsp. pneumophila (strain Philadelphia 1 / ATCC 33152 / DSM 7513)</name>
    <dbReference type="NCBI Taxonomy" id="272624"/>
    <lineage>
        <taxon>Bacteria</taxon>
        <taxon>Pseudomonadati</taxon>
        <taxon>Pseudomonadota</taxon>
        <taxon>Gammaproteobacteria</taxon>
        <taxon>Legionellales</taxon>
        <taxon>Legionellaceae</taxon>
        <taxon>Legionella</taxon>
    </lineage>
</organism>
<gene>
    <name evidence="1" type="primary">gcvPA</name>
    <name type="ordered locus">lpg0116</name>
</gene>
<keyword id="KW-0560">Oxidoreductase</keyword>
<keyword id="KW-1185">Reference proteome</keyword>
<reference key="1">
    <citation type="journal article" date="2004" name="Science">
        <title>The genomic sequence of the accidental pathogen Legionella pneumophila.</title>
        <authorList>
            <person name="Chien M."/>
            <person name="Morozova I."/>
            <person name="Shi S."/>
            <person name="Sheng H."/>
            <person name="Chen J."/>
            <person name="Gomez S.M."/>
            <person name="Asamani G."/>
            <person name="Hill K."/>
            <person name="Nuara J."/>
            <person name="Feder M."/>
            <person name="Rineer J."/>
            <person name="Greenberg J.J."/>
            <person name="Steshenko V."/>
            <person name="Park S.H."/>
            <person name="Zhao B."/>
            <person name="Teplitskaya E."/>
            <person name="Edwards J.R."/>
            <person name="Pampou S."/>
            <person name="Georghiou A."/>
            <person name="Chou I.-C."/>
            <person name="Iannuccilli W."/>
            <person name="Ulz M.E."/>
            <person name="Kim D.H."/>
            <person name="Geringer-Sameth A."/>
            <person name="Goldsberry C."/>
            <person name="Morozov P."/>
            <person name="Fischer S.G."/>
            <person name="Segal G."/>
            <person name="Qu X."/>
            <person name="Rzhetsky A."/>
            <person name="Zhang P."/>
            <person name="Cayanis E."/>
            <person name="De Jong P.J."/>
            <person name="Ju J."/>
            <person name="Kalachikov S."/>
            <person name="Shuman H.A."/>
            <person name="Russo J.J."/>
        </authorList>
    </citation>
    <scope>NUCLEOTIDE SEQUENCE [LARGE SCALE GENOMIC DNA]</scope>
    <source>
        <strain>Philadelphia 1 / ATCC 33152 / DSM 7513</strain>
    </source>
</reference>
<evidence type="ECO:0000255" key="1">
    <source>
        <dbReference type="HAMAP-Rule" id="MF_00712"/>
    </source>
</evidence>
<comment type="function">
    <text evidence="1">The glycine cleavage system catalyzes the degradation of glycine. The P protein binds the alpha-amino group of glycine through its pyridoxal phosphate cofactor; CO(2) is released and the remaining methylamine moiety is then transferred to the lipoamide cofactor of the H protein.</text>
</comment>
<comment type="catalytic activity">
    <reaction evidence="1">
        <text>N(6)-[(R)-lipoyl]-L-lysyl-[glycine-cleavage complex H protein] + glycine + H(+) = N(6)-[(R)-S(8)-aminomethyldihydrolipoyl]-L-lysyl-[glycine-cleavage complex H protein] + CO2</text>
        <dbReference type="Rhea" id="RHEA:24304"/>
        <dbReference type="Rhea" id="RHEA-COMP:10494"/>
        <dbReference type="Rhea" id="RHEA-COMP:10495"/>
        <dbReference type="ChEBI" id="CHEBI:15378"/>
        <dbReference type="ChEBI" id="CHEBI:16526"/>
        <dbReference type="ChEBI" id="CHEBI:57305"/>
        <dbReference type="ChEBI" id="CHEBI:83099"/>
        <dbReference type="ChEBI" id="CHEBI:83143"/>
        <dbReference type="EC" id="1.4.4.2"/>
    </reaction>
</comment>
<comment type="subunit">
    <text evidence="1">The glycine cleavage system is composed of four proteins: P, T, L and H. In this organism, the P 'protein' is a heterodimer of two subunits.</text>
</comment>
<comment type="similarity">
    <text evidence="1">Belongs to the GcvP family. N-terminal subunit subfamily.</text>
</comment>
<dbReference type="EC" id="1.4.4.2" evidence="1"/>
<dbReference type="EMBL" id="AE017354">
    <property type="protein sequence ID" value="AAU26223.1"/>
    <property type="molecule type" value="Genomic_DNA"/>
</dbReference>
<dbReference type="RefSeq" id="WP_010945877.1">
    <property type="nucleotide sequence ID" value="NC_002942.5"/>
</dbReference>
<dbReference type="RefSeq" id="YP_094170.1">
    <property type="nucleotide sequence ID" value="NC_002942.5"/>
</dbReference>
<dbReference type="SMR" id="Q5ZZ95"/>
<dbReference type="STRING" id="272624.lpg0116"/>
<dbReference type="PaxDb" id="272624-lpg0116"/>
<dbReference type="GeneID" id="57034123"/>
<dbReference type="KEGG" id="lpn:lpg0116"/>
<dbReference type="PATRIC" id="fig|272624.6.peg.122"/>
<dbReference type="eggNOG" id="COG0403">
    <property type="taxonomic scope" value="Bacteria"/>
</dbReference>
<dbReference type="HOGENOM" id="CLU_004620_0_2_6"/>
<dbReference type="OrthoDB" id="9801272at2"/>
<dbReference type="Proteomes" id="UP000000609">
    <property type="component" value="Chromosome"/>
</dbReference>
<dbReference type="GO" id="GO:0004375">
    <property type="term" value="F:glycine dehydrogenase (decarboxylating) activity"/>
    <property type="evidence" value="ECO:0007669"/>
    <property type="project" value="UniProtKB-EC"/>
</dbReference>
<dbReference type="GO" id="GO:0019464">
    <property type="term" value="P:glycine decarboxylation via glycine cleavage system"/>
    <property type="evidence" value="ECO:0007669"/>
    <property type="project" value="UniProtKB-UniRule"/>
</dbReference>
<dbReference type="GO" id="GO:0009116">
    <property type="term" value="P:nucleoside metabolic process"/>
    <property type="evidence" value="ECO:0007669"/>
    <property type="project" value="InterPro"/>
</dbReference>
<dbReference type="CDD" id="cd00613">
    <property type="entry name" value="GDC-P"/>
    <property type="match status" value="1"/>
</dbReference>
<dbReference type="Gene3D" id="3.90.1150.10">
    <property type="entry name" value="Aspartate Aminotransferase, domain 1"/>
    <property type="match status" value="1"/>
</dbReference>
<dbReference type="Gene3D" id="3.40.640.10">
    <property type="entry name" value="Type I PLP-dependent aspartate aminotransferase-like (Major domain)"/>
    <property type="match status" value="1"/>
</dbReference>
<dbReference type="HAMAP" id="MF_00712">
    <property type="entry name" value="GcvPA"/>
    <property type="match status" value="1"/>
</dbReference>
<dbReference type="InterPro" id="IPR023010">
    <property type="entry name" value="GcvPA"/>
</dbReference>
<dbReference type="InterPro" id="IPR049315">
    <property type="entry name" value="GDC-P_N"/>
</dbReference>
<dbReference type="InterPro" id="IPR020581">
    <property type="entry name" value="GDC_P"/>
</dbReference>
<dbReference type="InterPro" id="IPR015424">
    <property type="entry name" value="PyrdxlP-dep_Trfase"/>
</dbReference>
<dbReference type="InterPro" id="IPR015421">
    <property type="entry name" value="PyrdxlP-dep_Trfase_major"/>
</dbReference>
<dbReference type="InterPro" id="IPR015422">
    <property type="entry name" value="PyrdxlP-dep_Trfase_small"/>
</dbReference>
<dbReference type="NCBIfam" id="NF001696">
    <property type="entry name" value="PRK00451.1"/>
    <property type="match status" value="1"/>
</dbReference>
<dbReference type="PANTHER" id="PTHR42806">
    <property type="entry name" value="GLYCINE CLEAVAGE SYSTEM P-PROTEIN"/>
    <property type="match status" value="1"/>
</dbReference>
<dbReference type="PANTHER" id="PTHR42806:SF1">
    <property type="entry name" value="GLYCINE DEHYDROGENASE (DECARBOXYLATING)"/>
    <property type="match status" value="1"/>
</dbReference>
<dbReference type="Pfam" id="PF02347">
    <property type="entry name" value="GDC-P"/>
    <property type="match status" value="1"/>
</dbReference>
<dbReference type="PIRSF" id="PIRSF006815">
    <property type="entry name" value="GcvPA"/>
    <property type="match status" value="1"/>
</dbReference>
<dbReference type="SUPFAM" id="SSF53383">
    <property type="entry name" value="PLP-dependent transferases"/>
    <property type="match status" value="1"/>
</dbReference>
<sequence length="456" mass="49821">MPYIPHTPDDTKEMLEAIGAQDIQDLFDEIPASLQYAGFQNIPAGINEMEMLKEAQNQAQKNRNGICFIGAGCYEHHIPAAVWDIASRGEFLTAYTPYQAEASQGTLQLLYEYQTMICELTGMEVSNASMYDGATALAEAVLMAVRLNKHSKTNRVLIAGTVHPFYRETIETIVRNQHIEVITLPFDEQQGITNLGSLNQYTGEDITALVIAQPNFFGCLEQVDKMTSWAHHNKTISVACVNPTSLALLKPPGSWGEHGVDIVCGEGQPLGSPMASGGPYFGFLSTRMAHVRQMPGRIIGRTVDKDGKTGFSLTLQAREQHIRRAKATSNICTNQGLLVTAATIYMSLLGPEGLSQVATQCHQNTHELITALTQIEGVELAFKAPFFHEALIKLNQPVQSVLQQLADAGIAGGYAPEQHYPQLANTLLVCATEVRTAEDIAKYAKTLKTIMSKRGA</sequence>
<proteinExistence type="inferred from homology"/>
<name>GCSPA_LEGPH</name>
<accession>Q5ZZ95</accession>